<protein>
    <recommendedName>
        <fullName evidence="1">Membrane-bound lytic murein transglycosylase F</fullName>
        <ecNumber evidence="1">4.2.2.n1</ecNumber>
    </recommendedName>
    <alternativeName>
        <fullName evidence="1">Murein lyase F</fullName>
    </alternativeName>
</protein>
<organism>
    <name type="scientific">Vibrio campbellii (strain ATCC BAA-1116)</name>
    <dbReference type="NCBI Taxonomy" id="2902295"/>
    <lineage>
        <taxon>Bacteria</taxon>
        <taxon>Pseudomonadati</taxon>
        <taxon>Pseudomonadota</taxon>
        <taxon>Gammaproteobacteria</taxon>
        <taxon>Vibrionales</taxon>
        <taxon>Vibrionaceae</taxon>
        <taxon>Vibrio</taxon>
    </lineage>
</organism>
<feature type="signal peptide" evidence="1">
    <location>
        <begin position="1"/>
        <end position="24"/>
    </location>
</feature>
<feature type="chain" id="PRO_0000353992" description="Membrane-bound lytic murein transglycosylase F">
    <location>
        <begin position="25"/>
        <end position="534"/>
    </location>
</feature>
<feature type="region of interest" description="Non-LT domain" evidence="1">
    <location>
        <begin position="25"/>
        <end position="285"/>
    </location>
</feature>
<feature type="region of interest" description="LT domain" evidence="1">
    <location>
        <begin position="287"/>
        <end position="534"/>
    </location>
</feature>
<feature type="region of interest" description="Disordered" evidence="2">
    <location>
        <begin position="507"/>
        <end position="534"/>
    </location>
</feature>
<feature type="compositionally biased region" description="Low complexity" evidence="2">
    <location>
        <begin position="520"/>
        <end position="534"/>
    </location>
</feature>
<feature type="active site" evidence="1">
    <location>
        <position position="330"/>
    </location>
</feature>
<reference key="1">
    <citation type="submission" date="2007-08" db="EMBL/GenBank/DDBJ databases">
        <authorList>
            <consortium name="The Vibrio harveyi Genome Sequencing Project"/>
            <person name="Bassler B."/>
            <person name="Clifton S.W."/>
            <person name="Fulton L."/>
            <person name="Delehaunty K."/>
            <person name="Fronick C."/>
            <person name="Harrison M."/>
            <person name="Markivic C."/>
            <person name="Fulton R."/>
            <person name="Tin-Wollam A.-M."/>
            <person name="Shah N."/>
            <person name="Pepin K."/>
            <person name="Nash W."/>
            <person name="Thiruvilangam P."/>
            <person name="Bhonagiri V."/>
            <person name="Waters C."/>
            <person name="Tu K.C."/>
            <person name="Irgon J."/>
            <person name="Wilson R.K."/>
        </authorList>
    </citation>
    <scope>NUCLEOTIDE SEQUENCE [LARGE SCALE GENOMIC DNA]</scope>
    <source>
        <strain>ATCC BAA-1116 / BB120</strain>
    </source>
</reference>
<keyword id="KW-0998">Cell outer membrane</keyword>
<keyword id="KW-0961">Cell wall biogenesis/degradation</keyword>
<keyword id="KW-0456">Lyase</keyword>
<keyword id="KW-0472">Membrane</keyword>
<keyword id="KW-0732">Signal</keyword>
<gene>
    <name evidence="1" type="primary">mltF</name>
    <name type="ordered locus">VIBHAR_01149</name>
</gene>
<evidence type="ECO:0000255" key="1">
    <source>
        <dbReference type="HAMAP-Rule" id="MF_02016"/>
    </source>
</evidence>
<evidence type="ECO:0000256" key="2">
    <source>
        <dbReference type="SAM" id="MobiDB-lite"/>
    </source>
</evidence>
<sequence length="534" mass="60517">MQISQFNRLKRSALLFASVLLLSACQIESEPKSEFEQIQERGVLRVGTLNNQLSYYIGPDGPAGLDYELARKFAEQLGVKLEIRPAFRQAELFPALKKGDIDIIATGLNQTSQAVQRFRPGPAYYYVSQQVVYKKGQLRPRDVDQLIKYQESKDEKAGNEDSNAGAETLQIVEQSQFVPTLTALQKEHPELQFEIIGDADTRDLLKHVSTGELRFTVTDSVELSLAQRLYPDLALAFELTEDQPVSWFTRRSEDESLYAMLIEFFGNIKQSGELATLEEKYIGHIEAFDYVDTRAFIRALDNTLPKWSPLFQKYSEEFDWRLIAALAYQESHWKPKAKSPTGVRGMMMLTLPTAKSVGVTDRLDPEQSVRGGVEYLRRIVARVPDSINEHEKIWFALASYNVGYGHMMDARRLTKAQGGDPNAWADVKERLPLLRQKRYYSQTRYGYARGDEARNYVENIRRYYQSIIGHVSQKPAIDEDTEDLQVIPPLDPNLLVSGAVETLAEQVSGAVEVTPPPEENAPQEAEQTPVPKAE</sequence>
<name>MLTF_VIBC1</name>
<proteinExistence type="inferred from homology"/>
<dbReference type="EC" id="4.2.2.n1" evidence="1"/>
<dbReference type="EMBL" id="CP000789">
    <property type="protein sequence ID" value="ABU70139.1"/>
    <property type="molecule type" value="Genomic_DNA"/>
</dbReference>
<dbReference type="RefSeq" id="WP_005533708.1">
    <property type="nucleotide sequence ID" value="NC_022269.1"/>
</dbReference>
<dbReference type="SMR" id="A7MSG2"/>
<dbReference type="CAZy" id="GH23">
    <property type="family name" value="Glycoside Hydrolase Family 23"/>
</dbReference>
<dbReference type="KEGG" id="vha:VIBHAR_01149"/>
<dbReference type="PATRIC" id="fig|338187.25.peg.1479"/>
<dbReference type="Proteomes" id="UP000008152">
    <property type="component" value="Chromosome I"/>
</dbReference>
<dbReference type="GO" id="GO:0009279">
    <property type="term" value="C:cell outer membrane"/>
    <property type="evidence" value="ECO:0007669"/>
    <property type="project" value="UniProtKB-SubCell"/>
</dbReference>
<dbReference type="GO" id="GO:0008933">
    <property type="term" value="F:peptidoglycan lytic transglycosylase activity"/>
    <property type="evidence" value="ECO:0007669"/>
    <property type="project" value="UniProtKB-UniRule"/>
</dbReference>
<dbReference type="GO" id="GO:0016998">
    <property type="term" value="P:cell wall macromolecule catabolic process"/>
    <property type="evidence" value="ECO:0007669"/>
    <property type="project" value="UniProtKB-UniRule"/>
</dbReference>
<dbReference type="GO" id="GO:0071555">
    <property type="term" value="P:cell wall organization"/>
    <property type="evidence" value="ECO:0007669"/>
    <property type="project" value="UniProtKB-KW"/>
</dbReference>
<dbReference type="GO" id="GO:0009253">
    <property type="term" value="P:peptidoglycan catabolic process"/>
    <property type="evidence" value="ECO:0007669"/>
    <property type="project" value="TreeGrafter"/>
</dbReference>
<dbReference type="CDD" id="cd13403">
    <property type="entry name" value="MLTF-like"/>
    <property type="match status" value="1"/>
</dbReference>
<dbReference type="CDD" id="cd01009">
    <property type="entry name" value="PBP2_YfhD_N"/>
    <property type="match status" value="1"/>
</dbReference>
<dbReference type="FunFam" id="1.10.530.10:FF:000003">
    <property type="entry name" value="Membrane-bound lytic murein transglycosylase F"/>
    <property type="match status" value="1"/>
</dbReference>
<dbReference type="Gene3D" id="1.10.530.10">
    <property type="match status" value="1"/>
</dbReference>
<dbReference type="Gene3D" id="3.40.190.10">
    <property type="entry name" value="Periplasmic binding protein-like II"/>
    <property type="match status" value="2"/>
</dbReference>
<dbReference type="HAMAP" id="MF_02016">
    <property type="entry name" value="MltF"/>
    <property type="match status" value="1"/>
</dbReference>
<dbReference type="InterPro" id="IPR023346">
    <property type="entry name" value="Lysozyme-like_dom_sf"/>
</dbReference>
<dbReference type="InterPro" id="IPR023703">
    <property type="entry name" value="MltF"/>
</dbReference>
<dbReference type="InterPro" id="IPR001638">
    <property type="entry name" value="Solute-binding_3/MltF_N"/>
</dbReference>
<dbReference type="InterPro" id="IPR000189">
    <property type="entry name" value="Transglyc_AS"/>
</dbReference>
<dbReference type="InterPro" id="IPR008258">
    <property type="entry name" value="Transglycosylase_SLT_dom_1"/>
</dbReference>
<dbReference type="NCBIfam" id="NF008112">
    <property type="entry name" value="PRK10859.1"/>
    <property type="match status" value="1"/>
</dbReference>
<dbReference type="PANTHER" id="PTHR35936">
    <property type="entry name" value="MEMBRANE-BOUND LYTIC MUREIN TRANSGLYCOSYLASE F"/>
    <property type="match status" value="1"/>
</dbReference>
<dbReference type="PANTHER" id="PTHR35936:SF32">
    <property type="entry name" value="MEMBRANE-BOUND LYTIC MUREIN TRANSGLYCOSYLASE F"/>
    <property type="match status" value="1"/>
</dbReference>
<dbReference type="Pfam" id="PF00497">
    <property type="entry name" value="SBP_bac_3"/>
    <property type="match status" value="1"/>
</dbReference>
<dbReference type="Pfam" id="PF01464">
    <property type="entry name" value="SLT"/>
    <property type="match status" value="1"/>
</dbReference>
<dbReference type="SMART" id="SM00062">
    <property type="entry name" value="PBPb"/>
    <property type="match status" value="1"/>
</dbReference>
<dbReference type="SUPFAM" id="SSF53955">
    <property type="entry name" value="Lysozyme-like"/>
    <property type="match status" value="1"/>
</dbReference>
<dbReference type="SUPFAM" id="SSF53850">
    <property type="entry name" value="Periplasmic binding protein-like II"/>
    <property type="match status" value="1"/>
</dbReference>
<dbReference type="PROSITE" id="PS00922">
    <property type="entry name" value="TRANSGLYCOSYLASE"/>
    <property type="match status" value="1"/>
</dbReference>
<accession>A7MSG2</accession>
<comment type="function">
    <text evidence="1">Murein-degrading enzyme that degrades murein glycan strands and insoluble, high-molecular weight murein sacculi, with the concomitant formation of a 1,6-anhydromuramoyl product. Lytic transglycosylases (LTs) play an integral role in the metabolism of the peptidoglycan (PG) sacculus. Their lytic action creates space within the PG sacculus to allow for its expansion as well as for the insertion of various structures such as secretion systems and flagella.</text>
</comment>
<comment type="catalytic activity">
    <reaction evidence="1">
        <text>Exolytic cleavage of the (1-&gt;4)-beta-glycosidic linkage between N-acetylmuramic acid (MurNAc) and N-acetylglucosamine (GlcNAc) residues in peptidoglycan, from either the reducing or the non-reducing ends of the peptidoglycan chains, with concomitant formation of a 1,6-anhydrobond in the MurNAc residue.</text>
        <dbReference type="EC" id="4.2.2.n1"/>
    </reaction>
</comment>
<comment type="subcellular location">
    <subcellularLocation>
        <location>Cell outer membrane</location>
        <topology>Peripheral membrane protein</topology>
    </subcellularLocation>
    <text evidence="1">Attached to the inner leaflet of the outer membrane.</text>
</comment>
<comment type="domain">
    <text evidence="1">The N-terminal domain does not have lytic activity and probably modulates enzymatic activity. The C-terminal domain is the catalytic active domain.</text>
</comment>
<comment type="similarity">
    <text evidence="1">In the N-terminal section; belongs to the bacterial solute-binding protein 3 family.</text>
</comment>
<comment type="similarity">
    <text evidence="1">In the C-terminal section; belongs to the transglycosylase Slt family.</text>
</comment>